<feature type="chain" id="PRO_0000462153" description="N6-methyladenosine RNA demethylase ALKBH">
    <location>
        <begin position="1"/>
        <end position="224"/>
    </location>
</feature>
<feature type="domain" description="Fe2OG dioxygenase" evidence="1">
    <location>
        <begin position="93"/>
        <end position="222"/>
    </location>
</feature>
<feature type="binding site" evidence="1">
    <location>
        <position position="111"/>
    </location>
    <ligand>
        <name>Fe cation</name>
        <dbReference type="ChEBI" id="CHEBI:24875"/>
    </ligand>
</feature>
<feature type="binding site" evidence="1">
    <location>
        <position position="113"/>
    </location>
    <ligand>
        <name>Fe cation</name>
        <dbReference type="ChEBI" id="CHEBI:24875"/>
    </ligand>
</feature>
<feature type="binding site" evidence="1">
    <location>
        <position position="178"/>
    </location>
    <ligand>
        <name>Fe cation</name>
        <dbReference type="ChEBI" id="CHEBI:24875"/>
    </ligand>
</feature>
<feature type="binding site" evidence="1">
    <location>
        <position position="213"/>
    </location>
    <ligand>
        <name>2-oxoglutarate</name>
        <dbReference type="ChEBI" id="CHEBI:16810"/>
    </ligand>
</feature>
<reference key="1">
    <citation type="journal article" date="2020" name="Phytopathology">
        <title>Genome sequence of the chestnut blight fungus Cryphonectria parasitica EP155: A fundamental resource for an archetypical invasive plant pathogen.</title>
        <authorList>
            <person name="Crouch J.A."/>
            <person name="Dawe A."/>
            <person name="Aerts A."/>
            <person name="Barry K."/>
            <person name="Churchill A.C.L."/>
            <person name="Grimwood J."/>
            <person name="Hillman B."/>
            <person name="Milgroom M.G."/>
            <person name="Pangilinan J."/>
            <person name="Smith M."/>
            <person name="Salamov A."/>
            <person name="Schmutz J."/>
            <person name="Yadav J."/>
            <person name="Grigoriev I.V."/>
            <person name="Nuss D."/>
        </authorList>
    </citation>
    <scope>NUCLEOTIDE SEQUENCE [LARGE SCALE GENOMIC DNA]</scope>
    <source>
        <strain>ATCC 38755 / EP155</strain>
    </source>
</reference>
<reference key="2">
    <citation type="journal article" date="2025" name="MBio">
        <title>m6A demethylase CpALKBH regulates CpZap1 mRNA stability to modulate the development and virulence of chestnut blight fungus.</title>
        <authorList>
            <person name="Zhao L."/>
            <person name="Wei X."/>
            <person name="Chen F."/>
            <person name="Chen B."/>
            <person name="Li R."/>
        </authorList>
    </citation>
    <scope>FUNCTION</scope>
    <scope>CATALYTIC ACTIVITY</scope>
    <scope>DISRUPTION PHENOTYPE</scope>
</reference>
<accession>A0A9P4XUZ4</accession>
<keyword id="KW-0223">Dioxygenase</keyword>
<keyword id="KW-0408">Iron</keyword>
<keyword id="KW-0479">Metal-binding</keyword>
<keyword id="KW-0560">Oxidoreductase</keyword>
<keyword id="KW-1185">Reference proteome</keyword>
<keyword id="KW-0843">Virulence</keyword>
<proteinExistence type="evidence at protein level"/>
<gene>
    <name evidence="3" type="primary">ALKBH</name>
    <name type="ORF">M406DRAFT_358091</name>
</gene>
<name>ALKBH_CRYP1</name>
<evidence type="ECO:0000255" key="1">
    <source>
        <dbReference type="PROSITE-ProRule" id="PRU00805"/>
    </source>
</evidence>
<evidence type="ECO:0000269" key="2">
    <source>
    </source>
</evidence>
<evidence type="ECO:0000303" key="3">
    <source>
    </source>
</evidence>
<evidence type="ECO:0000305" key="4"/>
<sequence length="224" mass="25976">MHLHYDLPYPKHDMTDEPVSFFTYPPDSDTKFIPKDPCVHKPLSIKQVMERKLHWITLGGQYDWTNRVYPGERPPEFPRDVAGLLETLFPETLAQAAIVNFYTPGDTMMMHRDVSEETDKGLVSLSMGCDALFMIAPNDVGKMSEEDRPGHGEKEHLLLRIRSGDAIYMTQEARYAWHGVPKVLKGTCPDYLEDWPAEDGKYEEWQGWMKNKRINLNVRQMRDC</sequence>
<organism>
    <name type="scientific">Cryphonectria parasitica (strain ATCC 38755 / EP155)</name>
    <dbReference type="NCBI Taxonomy" id="660469"/>
    <lineage>
        <taxon>Eukaryota</taxon>
        <taxon>Fungi</taxon>
        <taxon>Dikarya</taxon>
        <taxon>Ascomycota</taxon>
        <taxon>Pezizomycotina</taxon>
        <taxon>Sordariomycetes</taxon>
        <taxon>Sordariomycetidae</taxon>
        <taxon>Diaporthales</taxon>
        <taxon>Cryphonectriaceae</taxon>
        <taxon>Cryphonectria-Endothia species complex</taxon>
        <taxon>Cryphonectria</taxon>
    </lineage>
</organism>
<dbReference type="EC" id="1.14.11.53" evidence="2"/>
<dbReference type="EMBL" id="MU032351">
    <property type="protein sequence ID" value="KAF3761769.1"/>
    <property type="molecule type" value="Genomic_DNA"/>
</dbReference>
<dbReference type="Proteomes" id="UP000803844">
    <property type="component" value="Unassembled WGS sequence"/>
</dbReference>
<dbReference type="GO" id="GO:0005737">
    <property type="term" value="C:cytoplasm"/>
    <property type="evidence" value="ECO:0007669"/>
    <property type="project" value="TreeGrafter"/>
</dbReference>
<dbReference type="GO" id="GO:0005634">
    <property type="term" value="C:nucleus"/>
    <property type="evidence" value="ECO:0007669"/>
    <property type="project" value="TreeGrafter"/>
</dbReference>
<dbReference type="GO" id="GO:0051213">
    <property type="term" value="F:dioxygenase activity"/>
    <property type="evidence" value="ECO:0007669"/>
    <property type="project" value="UniProtKB-KW"/>
</dbReference>
<dbReference type="GO" id="GO:0046872">
    <property type="term" value="F:metal ion binding"/>
    <property type="evidence" value="ECO:0007669"/>
    <property type="project" value="UniProtKB-KW"/>
</dbReference>
<dbReference type="GO" id="GO:0006281">
    <property type="term" value="P:DNA repair"/>
    <property type="evidence" value="ECO:0007669"/>
    <property type="project" value="UniProtKB-KW"/>
</dbReference>
<dbReference type="FunFam" id="2.60.120.590:FF:000014">
    <property type="entry name" value="Oxidoreductase, 2OG-Fe(II) oxygenase family family"/>
    <property type="match status" value="1"/>
</dbReference>
<dbReference type="Gene3D" id="2.60.120.590">
    <property type="entry name" value="Alpha-ketoglutarate-dependent dioxygenase AlkB-like"/>
    <property type="match status" value="1"/>
</dbReference>
<dbReference type="InterPro" id="IPR004574">
    <property type="entry name" value="Alkb"/>
</dbReference>
<dbReference type="InterPro" id="IPR027450">
    <property type="entry name" value="AlkB-like"/>
</dbReference>
<dbReference type="InterPro" id="IPR037151">
    <property type="entry name" value="AlkB-like_sf"/>
</dbReference>
<dbReference type="InterPro" id="IPR005123">
    <property type="entry name" value="Oxoglu/Fe-dep_dioxygenase_dom"/>
</dbReference>
<dbReference type="PANTHER" id="PTHR16557">
    <property type="entry name" value="ALKYLATED DNA REPAIR PROTEIN ALKB-RELATED"/>
    <property type="match status" value="1"/>
</dbReference>
<dbReference type="PANTHER" id="PTHR16557:SF2">
    <property type="entry name" value="NUCLEIC ACID DIOXYGENASE ALKBH1"/>
    <property type="match status" value="1"/>
</dbReference>
<dbReference type="Pfam" id="PF13532">
    <property type="entry name" value="2OG-FeII_Oxy_2"/>
    <property type="match status" value="1"/>
</dbReference>
<dbReference type="SUPFAM" id="SSF51197">
    <property type="entry name" value="Clavaminate synthase-like"/>
    <property type="match status" value="1"/>
</dbReference>
<dbReference type="PROSITE" id="PS51471">
    <property type="entry name" value="FE2OG_OXY"/>
    <property type="match status" value="1"/>
</dbReference>
<protein>
    <recommendedName>
        <fullName evidence="3">N6-methyladenosine RNA demethylase ALKBH</fullName>
        <ecNumber evidence="2">1.14.11.53</ecNumber>
    </recommendedName>
    <alternativeName>
        <fullName evidence="3">M6A eraser ALKBH</fullName>
    </alternativeName>
    <alternativeName>
        <fullName evidence="4">Nucleic acid dioxygenase ALKBH</fullName>
    </alternativeName>
</protein>
<comment type="function">
    <text evidence="2">RNA demethylase that regulates the stability of mRNAs through an m(6)A-dependent manner (PubMed:39611846). M6A is a modification present at internal sites of mRNAs and some non-coding RNAs and plays a role in mRNA stability and processing (PubMed:39611846). Demethylate m6A at position A1935 within the 3'UTR of transcription factor ZAP1 and plays an important role in C.parasitica development and virulence (PubMed:39611846). Target mRNAs are primarily associated with amino-acid biosynthesis, 2-oxocarboxylic acid metabolism, and ABC transporters, as well as alpha-amino acid metabolism, small-molecule biosynthesis, and the sulfite reductase complex (NADPH) (PubMed:39611846).</text>
</comment>
<comment type="catalytic activity">
    <reaction evidence="2">
        <text>an N(6)-methyladenosine in mRNA + 2-oxoglutarate + O2 = an adenosine in mRNA + formaldehyde + succinate + CO2</text>
        <dbReference type="Rhea" id="RHEA:49520"/>
        <dbReference type="Rhea" id="RHEA-COMP:12414"/>
        <dbReference type="Rhea" id="RHEA-COMP:12417"/>
        <dbReference type="ChEBI" id="CHEBI:15379"/>
        <dbReference type="ChEBI" id="CHEBI:16526"/>
        <dbReference type="ChEBI" id="CHEBI:16810"/>
        <dbReference type="ChEBI" id="CHEBI:16842"/>
        <dbReference type="ChEBI" id="CHEBI:30031"/>
        <dbReference type="ChEBI" id="CHEBI:74411"/>
        <dbReference type="ChEBI" id="CHEBI:74449"/>
        <dbReference type="EC" id="1.14.11.53"/>
    </reaction>
    <physiologicalReaction direction="left-to-right" evidence="2">
        <dbReference type="Rhea" id="RHEA:49521"/>
    </physiologicalReaction>
</comment>
<comment type="cofactor">
    <cofactor evidence="1">
        <name>Fe(2+)</name>
        <dbReference type="ChEBI" id="CHEBI:29033"/>
    </cofactor>
    <text evidence="1">Binds 1 Fe(2+) ion per subunit.</text>
</comment>
<comment type="disruption phenotype">
    <text evidence="2">Leads to a 1.95-fold increase of the m(6)A RNA methylation level, a slower growth rate and a significantly reduced sporulation (PubMed:39611846). Also significantly reduces virulence on chestnut stems and red Fuji apples (PubMed:39611846). Results in the up-regulation of genes primarily associated with amino acid biosynthesis, 2-oxocarboxylic acid metabolism, and ABC transporters, as well as alpha-amino acid metabolism, small-molecule biosynthesis, and the sulfite reductase complex (NADPH) (PubMed:39611846).</text>
</comment>
<comment type="similarity">
    <text evidence="4">Belongs to the alkB family.</text>
</comment>